<name>PEPD_SALDU</name>
<sequence length="433" mass="48159">MKKYLAFAVTLLGMGKVIACTTLFVGNQASADGSFIIARNEDGSANNAKHKVIHPVAFHQQGEYKAHRNNFSWPLPETAMRYTAIHDFDTNDNAMGEAGFNSAGVGMSATETIYNGRAALAADPYVTKTGITEDAIESVILPVAQSARQGAKLLGDIIEQKGAGEGFGVAFIDSKEIWYLETGSGHQWLAVRLPADSYFVSANQGRLRHYDPNDNANYMASPTLVSFAKKQGLYDPARGEFDFHQAYSQDNKNDTTYNYPRVWTLQHQFNPHLDTVVSPGETFPVFLTPITKISVAAVKNALRNHYQGTSHDPYASHNPQEPWRPISVFRTQESHILQVRPKLPQAIGNVEYIAYGMPSLSVYLPYYQGMRHYQPGDDKGPIGRATTLPTGHSARCKRWLCRTTMRLRQMCNTPAKHLNSKQLSSSIRWSRAI</sequence>
<comment type="catalytic activity">
    <reaction>
        <text>an L-aminoacyl-L-amino acid + H2O = 2 an L-alpha-amino acid</text>
        <dbReference type="Rhea" id="RHEA:48940"/>
        <dbReference type="ChEBI" id="CHEBI:15377"/>
        <dbReference type="ChEBI" id="CHEBI:59869"/>
        <dbReference type="ChEBI" id="CHEBI:77460"/>
        <dbReference type="EC" id="3.4.13.19"/>
    </reaction>
</comment>
<comment type="similarity">
    <text evidence="2">Belongs to the peptidase C69 family.</text>
</comment>
<gene>
    <name type="primary">pipD</name>
</gene>
<dbReference type="EC" id="3.4.13.19"/>
<dbReference type="EMBL" id="AF060858">
    <property type="protein sequence ID" value="AAC33721.1"/>
    <property type="molecule type" value="Genomic_DNA"/>
</dbReference>
<dbReference type="SMR" id="O85304"/>
<dbReference type="GO" id="GO:0070004">
    <property type="term" value="F:cysteine-type exopeptidase activity"/>
    <property type="evidence" value="ECO:0007669"/>
    <property type="project" value="InterPro"/>
</dbReference>
<dbReference type="GO" id="GO:0016805">
    <property type="term" value="F:dipeptidase activity"/>
    <property type="evidence" value="ECO:0007669"/>
    <property type="project" value="UniProtKB-KW"/>
</dbReference>
<dbReference type="GO" id="GO:0006508">
    <property type="term" value="P:proteolysis"/>
    <property type="evidence" value="ECO:0007669"/>
    <property type="project" value="UniProtKB-KW"/>
</dbReference>
<dbReference type="Gene3D" id="3.60.60.10">
    <property type="entry name" value="Penicillin V Acylase, Chain A"/>
    <property type="match status" value="1"/>
</dbReference>
<dbReference type="InterPro" id="IPR047804">
    <property type="entry name" value="C69_dipept_A-like"/>
</dbReference>
<dbReference type="InterPro" id="IPR005322">
    <property type="entry name" value="Peptidase_C69"/>
</dbReference>
<dbReference type="NCBIfam" id="NF033678">
    <property type="entry name" value="C69_fam_dipept"/>
    <property type="match status" value="1"/>
</dbReference>
<dbReference type="PANTHER" id="PTHR12994:SF17">
    <property type="entry name" value="LD30995P"/>
    <property type="match status" value="1"/>
</dbReference>
<dbReference type="PANTHER" id="PTHR12994">
    <property type="entry name" value="SECERNIN"/>
    <property type="match status" value="1"/>
</dbReference>
<dbReference type="Pfam" id="PF03577">
    <property type="entry name" value="Peptidase_C69"/>
    <property type="match status" value="1"/>
</dbReference>
<protein>
    <recommendedName>
        <fullName>Probable dipeptidase</fullName>
        <ecNumber>3.4.13.19</ecNumber>
    </recommendedName>
</protein>
<feature type="chain" id="PRO_0000220385" description="Probable dipeptidase">
    <location>
        <begin position="1"/>
        <end position="433"/>
    </location>
</feature>
<feature type="active site" evidence="1">
    <location>
        <position position="20"/>
    </location>
</feature>
<evidence type="ECO:0000255" key="1"/>
<evidence type="ECO:0000305" key="2"/>
<proteinExistence type="inferred from homology"/>
<organism>
    <name type="scientific">Salmonella dublin</name>
    <dbReference type="NCBI Taxonomy" id="98360"/>
    <lineage>
        <taxon>Bacteria</taxon>
        <taxon>Pseudomonadati</taxon>
        <taxon>Pseudomonadota</taxon>
        <taxon>Gammaproteobacteria</taxon>
        <taxon>Enterobacterales</taxon>
        <taxon>Enterobacteriaceae</taxon>
        <taxon>Salmonella</taxon>
    </lineage>
</organism>
<keyword id="KW-0224">Dipeptidase</keyword>
<keyword id="KW-0378">Hydrolase</keyword>
<keyword id="KW-0645">Protease</keyword>
<reference key="1">
    <citation type="journal article" date="1998" name="Mol. Microbiol.">
        <title>Identification of a pathogenicity island required for Salmonella enteropathogenicity.</title>
        <authorList>
            <person name="Wood M.W."/>
            <person name="Jones M.A."/>
            <person name="Watson P.R."/>
            <person name="Hedges S."/>
            <person name="Wallis T.S."/>
            <person name="Galyov E.E."/>
        </authorList>
    </citation>
    <scope>NUCLEOTIDE SEQUENCE [GENOMIC DNA]</scope>
    <source>
        <strain>2229</strain>
    </source>
</reference>
<accession>O85304</accession>